<sequence>MKKRRKVTSNLDEKIHLGYHKDSSEENAAVECGQVTYTQAPERPTPEAAQRCQELPPSPDQRKLLSSLQYNKNLLKYLNDDRQKQPSFCDLLIIVEGKEFSAHKVVVAVGSSYFHACLSKNPSTDVVTLDHVTHSVFQHLLEFLYTSEFFVYKYEIPLVLEAAKFLDIIDAVKLLNNENVAAFQAELTEKSSPEETLNELTGRLSSSHQCKFCSRHFCYKKSLENHLAKTHRSLLLGKKHGLKMLERSFSTRRSKRNRKCPVKFEDTSDDEQESGDGSDNLHQESSEKERSDRNDSEDPGSEYNAEDEELEEEVSDEDSDTEQSDKDNDAEEEPEAGDSAGSIHEGLAPVIIQNSNKKILQCPKCDKTFDRIGKYESHTRVHTGEKPFECDICHQRYSTKSNLTVHRKKHSNEVEFHRKEHKCPYCNKLHASKKTLAKHVKRFHPENAQEFISIKKTKSESWKCDICKKSFTRRPHLEEHMILHSQDKPFKCTYCEEHFKSRFARLKHQEKFHLGPFPCDICGRQFNDTGNLKRHIECTHGGKRKWTCFICGKSVRERTTLKEHLRIHSGEKPHLCSICGQSFRHGSSYRLHLRVHHDDKRYECDECGKTFIRHDHLTKHKKIHSGEKAHQCEECGKCFGRRDHLTVHYKSVHLGEKVWQKYKATFHQCDVCKKIFKGKSSLEMHFRTHSGEKPYKCQICNQSFRIKKTLTKHLVIHSDARPFNCQHCNATFKRKDKLKYHIDHVHGIKSPDDSLSTSEEKLMSLPMEYSSDDKIFQAETKQYLDQPKVYQSEAKTMLQNVSAEVCVPVTLVPVQMPDTSSDLVPHTTTLPTSSHEMLPPQPQSTDYPRAADLAFLEKYTLTPQPANIVHPVRPEQMLDPREPSYLGTLLGLDSTAAVQNMCSSEHRS</sequence>
<accession>Q811F1</accession>
<accession>A2A706</accession>
<accession>Q8BI96</accession>
<accession>Q8BV67</accession>
<accession>Q8BYV8</accession>
<evidence type="ECO:0000255" key="1">
    <source>
        <dbReference type="PROSITE-ProRule" id="PRU00037"/>
    </source>
</evidence>
<evidence type="ECO:0000255" key="2">
    <source>
        <dbReference type="PROSITE-ProRule" id="PRU00042"/>
    </source>
</evidence>
<evidence type="ECO:0000256" key="3">
    <source>
        <dbReference type="SAM" id="MobiDB-lite"/>
    </source>
</evidence>
<evidence type="ECO:0000305" key="4"/>
<keyword id="KW-0238">DNA-binding</keyword>
<keyword id="KW-0479">Metal-binding</keyword>
<keyword id="KW-0539">Nucleus</keyword>
<keyword id="KW-1185">Reference proteome</keyword>
<keyword id="KW-0677">Repeat</keyword>
<keyword id="KW-0804">Transcription</keyword>
<keyword id="KW-0805">Transcription regulation</keyword>
<keyword id="KW-0862">Zinc</keyword>
<keyword id="KW-0863">Zinc-finger</keyword>
<organism>
    <name type="scientific">Mus musculus</name>
    <name type="common">Mouse</name>
    <dbReference type="NCBI Taxonomy" id="10090"/>
    <lineage>
        <taxon>Eukaryota</taxon>
        <taxon>Metazoa</taxon>
        <taxon>Chordata</taxon>
        <taxon>Craniata</taxon>
        <taxon>Vertebrata</taxon>
        <taxon>Euteleostomi</taxon>
        <taxon>Mammalia</taxon>
        <taxon>Eutheria</taxon>
        <taxon>Euarchontoglires</taxon>
        <taxon>Glires</taxon>
        <taxon>Rodentia</taxon>
        <taxon>Myomorpha</taxon>
        <taxon>Muroidea</taxon>
        <taxon>Muridae</taxon>
        <taxon>Murinae</taxon>
        <taxon>Mus</taxon>
        <taxon>Mus</taxon>
    </lineage>
</organism>
<gene>
    <name type="primary">Zbtb41</name>
</gene>
<reference key="1">
    <citation type="journal article" date="2005" name="Science">
        <title>The transcriptional landscape of the mammalian genome.</title>
        <authorList>
            <person name="Carninci P."/>
            <person name="Kasukawa T."/>
            <person name="Katayama S."/>
            <person name="Gough J."/>
            <person name="Frith M.C."/>
            <person name="Maeda N."/>
            <person name="Oyama R."/>
            <person name="Ravasi T."/>
            <person name="Lenhard B."/>
            <person name="Wells C."/>
            <person name="Kodzius R."/>
            <person name="Shimokawa K."/>
            <person name="Bajic V.B."/>
            <person name="Brenner S.E."/>
            <person name="Batalov S."/>
            <person name="Forrest A.R."/>
            <person name="Zavolan M."/>
            <person name="Davis M.J."/>
            <person name="Wilming L.G."/>
            <person name="Aidinis V."/>
            <person name="Allen J.E."/>
            <person name="Ambesi-Impiombato A."/>
            <person name="Apweiler R."/>
            <person name="Aturaliya R.N."/>
            <person name="Bailey T.L."/>
            <person name="Bansal M."/>
            <person name="Baxter L."/>
            <person name="Beisel K.W."/>
            <person name="Bersano T."/>
            <person name="Bono H."/>
            <person name="Chalk A.M."/>
            <person name="Chiu K.P."/>
            <person name="Choudhary V."/>
            <person name="Christoffels A."/>
            <person name="Clutterbuck D.R."/>
            <person name="Crowe M.L."/>
            <person name="Dalla E."/>
            <person name="Dalrymple B.P."/>
            <person name="de Bono B."/>
            <person name="Della Gatta G."/>
            <person name="di Bernardo D."/>
            <person name="Down T."/>
            <person name="Engstrom P."/>
            <person name="Fagiolini M."/>
            <person name="Faulkner G."/>
            <person name="Fletcher C.F."/>
            <person name="Fukushima T."/>
            <person name="Furuno M."/>
            <person name="Futaki S."/>
            <person name="Gariboldi M."/>
            <person name="Georgii-Hemming P."/>
            <person name="Gingeras T.R."/>
            <person name="Gojobori T."/>
            <person name="Green R.E."/>
            <person name="Gustincich S."/>
            <person name="Harbers M."/>
            <person name="Hayashi Y."/>
            <person name="Hensch T.K."/>
            <person name="Hirokawa N."/>
            <person name="Hill D."/>
            <person name="Huminiecki L."/>
            <person name="Iacono M."/>
            <person name="Ikeo K."/>
            <person name="Iwama A."/>
            <person name="Ishikawa T."/>
            <person name="Jakt M."/>
            <person name="Kanapin A."/>
            <person name="Katoh M."/>
            <person name="Kawasawa Y."/>
            <person name="Kelso J."/>
            <person name="Kitamura H."/>
            <person name="Kitano H."/>
            <person name="Kollias G."/>
            <person name="Krishnan S.P."/>
            <person name="Kruger A."/>
            <person name="Kummerfeld S.K."/>
            <person name="Kurochkin I.V."/>
            <person name="Lareau L.F."/>
            <person name="Lazarevic D."/>
            <person name="Lipovich L."/>
            <person name="Liu J."/>
            <person name="Liuni S."/>
            <person name="McWilliam S."/>
            <person name="Madan Babu M."/>
            <person name="Madera M."/>
            <person name="Marchionni L."/>
            <person name="Matsuda H."/>
            <person name="Matsuzawa S."/>
            <person name="Miki H."/>
            <person name="Mignone F."/>
            <person name="Miyake S."/>
            <person name="Morris K."/>
            <person name="Mottagui-Tabar S."/>
            <person name="Mulder N."/>
            <person name="Nakano N."/>
            <person name="Nakauchi H."/>
            <person name="Ng P."/>
            <person name="Nilsson R."/>
            <person name="Nishiguchi S."/>
            <person name="Nishikawa S."/>
            <person name="Nori F."/>
            <person name="Ohara O."/>
            <person name="Okazaki Y."/>
            <person name="Orlando V."/>
            <person name="Pang K.C."/>
            <person name="Pavan W.J."/>
            <person name="Pavesi G."/>
            <person name="Pesole G."/>
            <person name="Petrovsky N."/>
            <person name="Piazza S."/>
            <person name="Reed J."/>
            <person name="Reid J.F."/>
            <person name="Ring B.Z."/>
            <person name="Ringwald M."/>
            <person name="Rost B."/>
            <person name="Ruan Y."/>
            <person name="Salzberg S.L."/>
            <person name="Sandelin A."/>
            <person name="Schneider C."/>
            <person name="Schoenbach C."/>
            <person name="Sekiguchi K."/>
            <person name="Semple C.A."/>
            <person name="Seno S."/>
            <person name="Sessa L."/>
            <person name="Sheng Y."/>
            <person name="Shibata Y."/>
            <person name="Shimada H."/>
            <person name="Shimada K."/>
            <person name="Silva D."/>
            <person name="Sinclair B."/>
            <person name="Sperling S."/>
            <person name="Stupka E."/>
            <person name="Sugiura K."/>
            <person name="Sultana R."/>
            <person name="Takenaka Y."/>
            <person name="Taki K."/>
            <person name="Tammoja K."/>
            <person name="Tan S.L."/>
            <person name="Tang S."/>
            <person name="Taylor M.S."/>
            <person name="Tegner J."/>
            <person name="Teichmann S.A."/>
            <person name="Ueda H.R."/>
            <person name="van Nimwegen E."/>
            <person name="Verardo R."/>
            <person name="Wei C.L."/>
            <person name="Yagi K."/>
            <person name="Yamanishi H."/>
            <person name="Zabarovsky E."/>
            <person name="Zhu S."/>
            <person name="Zimmer A."/>
            <person name="Hide W."/>
            <person name="Bult C."/>
            <person name="Grimmond S.M."/>
            <person name="Teasdale R.D."/>
            <person name="Liu E.T."/>
            <person name="Brusic V."/>
            <person name="Quackenbush J."/>
            <person name="Wahlestedt C."/>
            <person name="Mattick J.S."/>
            <person name="Hume D.A."/>
            <person name="Kai C."/>
            <person name="Sasaki D."/>
            <person name="Tomaru Y."/>
            <person name="Fukuda S."/>
            <person name="Kanamori-Katayama M."/>
            <person name="Suzuki M."/>
            <person name="Aoki J."/>
            <person name="Arakawa T."/>
            <person name="Iida J."/>
            <person name="Imamura K."/>
            <person name="Itoh M."/>
            <person name="Kato T."/>
            <person name="Kawaji H."/>
            <person name="Kawagashira N."/>
            <person name="Kawashima T."/>
            <person name="Kojima M."/>
            <person name="Kondo S."/>
            <person name="Konno H."/>
            <person name="Nakano K."/>
            <person name="Ninomiya N."/>
            <person name="Nishio T."/>
            <person name="Okada M."/>
            <person name="Plessy C."/>
            <person name="Shibata K."/>
            <person name="Shiraki T."/>
            <person name="Suzuki S."/>
            <person name="Tagami M."/>
            <person name="Waki K."/>
            <person name="Watahiki A."/>
            <person name="Okamura-Oho Y."/>
            <person name="Suzuki H."/>
            <person name="Kawai J."/>
            <person name="Hayashizaki Y."/>
        </authorList>
    </citation>
    <scope>NUCLEOTIDE SEQUENCE [LARGE SCALE MRNA]</scope>
    <source>
        <strain>C57BL/6J</strain>
        <tissue>Bone</tissue>
        <tissue>Egg</tissue>
        <tissue>Thymus</tissue>
    </source>
</reference>
<reference key="2">
    <citation type="journal article" date="2009" name="PLoS Biol.">
        <title>Lineage-specific biology revealed by a finished genome assembly of the mouse.</title>
        <authorList>
            <person name="Church D.M."/>
            <person name="Goodstadt L."/>
            <person name="Hillier L.W."/>
            <person name="Zody M.C."/>
            <person name="Goldstein S."/>
            <person name="She X."/>
            <person name="Bult C.J."/>
            <person name="Agarwala R."/>
            <person name="Cherry J.L."/>
            <person name="DiCuccio M."/>
            <person name="Hlavina W."/>
            <person name="Kapustin Y."/>
            <person name="Meric P."/>
            <person name="Maglott D."/>
            <person name="Birtle Z."/>
            <person name="Marques A.C."/>
            <person name="Graves T."/>
            <person name="Zhou S."/>
            <person name="Teague B."/>
            <person name="Potamousis K."/>
            <person name="Churas C."/>
            <person name="Place M."/>
            <person name="Herschleb J."/>
            <person name="Runnheim R."/>
            <person name="Forrest D."/>
            <person name="Amos-Landgraf J."/>
            <person name="Schwartz D.C."/>
            <person name="Cheng Z."/>
            <person name="Lindblad-Toh K."/>
            <person name="Eichler E.E."/>
            <person name="Ponting C.P."/>
        </authorList>
    </citation>
    <scope>NUCLEOTIDE SEQUENCE [LARGE SCALE GENOMIC DNA]</scope>
    <source>
        <strain>C57BL/6J</strain>
    </source>
</reference>
<reference key="3">
    <citation type="journal article" date="2004" name="Genome Res.">
        <title>The status, quality, and expansion of the NIH full-length cDNA project: the Mammalian Gene Collection (MGC).</title>
        <authorList>
            <consortium name="The MGC Project Team"/>
        </authorList>
    </citation>
    <scope>NUCLEOTIDE SEQUENCE [LARGE SCALE MRNA] OF 225-907</scope>
    <source>
        <strain>Czech II</strain>
        <tissue>Mammary tumor</tissue>
    </source>
</reference>
<proteinExistence type="evidence at transcript level"/>
<protein>
    <recommendedName>
        <fullName>Zinc finger and BTB domain-containing protein 41</fullName>
    </recommendedName>
</protein>
<feature type="chain" id="PRO_0000277815" description="Zinc finger and BTB domain-containing protein 41">
    <location>
        <begin position="1"/>
        <end position="908"/>
    </location>
</feature>
<feature type="domain" description="BTB" evidence="1">
    <location>
        <begin position="89"/>
        <end position="153"/>
    </location>
</feature>
<feature type="zinc finger region" description="C2H2-type 1" evidence="2">
    <location>
        <begin position="208"/>
        <end position="231"/>
    </location>
</feature>
<feature type="zinc finger region" description="C2H2-type 2" evidence="2">
    <location>
        <begin position="360"/>
        <end position="382"/>
    </location>
</feature>
<feature type="zinc finger region" description="C2H2-type 3" evidence="2">
    <location>
        <begin position="388"/>
        <end position="410"/>
    </location>
</feature>
<feature type="zinc finger region" description="C2H2-type 4" evidence="2">
    <location>
        <begin position="421"/>
        <end position="444"/>
    </location>
</feature>
<feature type="zinc finger region" description="C2H2-type 5" evidence="2">
    <location>
        <begin position="462"/>
        <end position="484"/>
    </location>
</feature>
<feature type="zinc finger region" description="C2H2-type 6" evidence="2">
    <location>
        <begin position="490"/>
        <end position="513"/>
    </location>
</feature>
<feature type="zinc finger region" description="C2H2-type 7" evidence="2">
    <location>
        <begin position="517"/>
        <end position="540"/>
    </location>
</feature>
<feature type="zinc finger region" description="C2H2-type 8" evidence="2">
    <location>
        <begin position="546"/>
        <end position="568"/>
    </location>
</feature>
<feature type="zinc finger region" description="C2H2-type 9" evidence="2">
    <location>
        <begin position="574"/>
        <end position="596"/>
    </location>
</feature>
<feature type="zinc finger region" description="C2H2-type 10" evidence="2">
    <location>
        <begin position="602"/>
        <end position="624"/>
    </location>
</feature>
<feature type="zinc finger region" description="C2H2-type 11" evidence="2">
    <location>
        <begin position="630"/>
        <end position="653"/>
    </location>
</feature>
<feature type="zinc finger region" description="C2H2-type 12" evidence="2">
    <location>
        <begin position="667"/>
        <end position="689"/>
    </location>
</feature>
<feature type="zinc finger region" description="C2H2-type 13" evidence="2">
    <location>
        <begin position="695"/>
        <end position="717"/>
    </location>
</feature>
<feature type="zinc finger region" description="C2H2-type 14" evidence="2">
    <location>
        <begin position="723"/>
        <end position="746"/>
    </location>
</feature>
<feature type="region of interest" description="Disordered" evidence="3">
    <location>
        <begin position="38"/>
        <end position="59"/>
    </location>
</feature>
<feature type="region of interest" description="Disordered" evidence="3">
    <location>
        <begin position="252"/>
        <end position="344"/>
    </location>
</feature>
<feature type="compositionally biased region" description="Basic residues" evidence="3">
    <location>
        <begin position="252"/>
        <end position="261"/>
    </location>
</feature>
<feature type="compositionally biased region" description="Acidic residues" evidence="3">
    <location>
        <begin position="267"/>
        <end position="276"/>
    </location>
</feature>
<feature type="compositionally biased region" description="Basic and acidic residues" evidence="3">
    <location>
        <begin position="279"/>
        <end position="296"/>
    </location>
</feature>
<feature type="compositionally biased region" description="Acidic residues" evidence="3">
    <location>
        <begin position="297"/>
        <end position="336"/>
    </location>
</feature>
<feature type="sequence conflict" description="In Ref. 3; AAH46465." evidence="4" ref="3">
    <original>LAK</original>
    <variation>ASE</variation>
    <location>
        <begin position="227"/>
        <end position="229"/>
    </location>
</feature>
<feature type="sequence conflict" description="In Ref. 3; AAH46465." evidence="4" ref="3">
    <original>I</original>
    <variation>V</variation>
    <location>
        <position position="352"/>
    </location>
</feature>
<feature type="sequence conflict" description="In Ref. 1; BAC37731." evidence="4" ref="1">
    <original>P</original>
    <variation>H</variation>
    <location>
        <position position="722"/>
    </location>
</feature>
<feature type="sequence conflict" description="In Ref. 3; AAH46465." evidence="4" ref="3">
    <original>A</original>
    <variation>T</variation>
    <location>
        <position position="896"/>
    </location>
</feature>
<feature type="sequence conflict" description="In Ref. 3; AAH46465." evidence="4" ref="3">
    <original>C</original>
    <variation>S</variation>
    <location>
        <position position="902"/>
    </location>
</feature>
<comment type="function">
    <text>May be involved in transcriptional regulation.</text>
</comment>
<comment type="subcellular location">
    <subcellularLocation>
        <location evidence="4">Nucleus</location>
    </subcellularLocation>
</comment>
<comment type="sequence caution" evidence="4">
    <conflict type="frameshift">
        <sequence resource="EMBL-CDS" id="BAC29469"/>
    </conflict>
</comment>
<comment type="sequence caution" evidence="4">
    <conflict type="frameshift">
        <sequence resource="EMBL-CDS" id="BAC37731"/>
    </conflict>
</comment>
<comment type="sequence caution" evidence="4">
    <conflict type="erroneous initiation">
        <sequence resource="EMBL-CDS" id="BAE37287"/>
    </conflict>
</comment>
<name>ZBT41_MOUSE</name>
<dbReference type="EMBL" id="AK036544">
    <property type="protein sequence ID" value="BAC29469.1"/>
    <property type="status" value="ALT_FRAME"/>
    <property type="molecule type" value="mRNA"/>
</dbReference>
<dbReference type="EMBL" id="AK037812">
    <property type="protein sequence ID" value="BAC29876.1"/>
    <property type="molecule type" value="mRNA"/>
</dbReference>
<dbReference type="EMBL" id="AK079719">
    <property type="protein sequence ID" value="BAC37731.1"/>
    <property type="status" value="ALT_FRAME"/>
    <property type="molecule type" value="mRNA"/>
</dbReference>
<dbReference type="EMBL" id="AK163302">
    <property type="protein sequence ID" value="BAE37287.1"/>
    <property type="status" value="ALT_INIT"/>
    <property type="molecule type" value="mRNA"/>
</dbReference>
<dbReference type="EMBL" id="AL606536">
    <property type="status" value="NOT_ANNOTATED_CDS"/>
    <property type="molecule type" value="Genomic_DNA"/>
</dbReference>
<dbReference type="EMBL" id="BC046465">
    <property type="protein sequence ID" value="AAH46465.3"/>
    <property type="molecule type" value="mRNA"/>
</dbReference>
<dbReference type="CCDS" id="CCDS48385.1"/>
<dbReference type="RefSeq" id="NP_001399623.1">
    <property type="nucleotide sequence ID" value="NM_001412694.1"/>
</dbReference>
<dbReference type="RefSeq" id="NP_766231.2">
    <property type="nucleotide sequence ID" value="NM_172643.6"/>
</dbReference>
<dbReference type="RefSeq" id="XP_006529509.1">
    <property type="nucleotide sequence ID" value="XM_006529446.3"/>
</dbReference>
<dbReference type="RefSeq" id="XP_006529510.1">
    <property type="nucleotide sequence ID" value="XM_006529447.5"/>
</dbReference>
<dbReference type="RefSeq" id="XP_006529511.1">
    <property type="nucleotide sequence ID" value="XM_006529448.4"/>
</dbReference>
<dbReference type="SMR" id="Q811F1"/>
<dbReference type="BioGRID" id="230517">
    <property type="interactions" value="1"/>
</dbReference>
<dbReference type="FunCoup" id="Q811F1">
    <property type="interactions" value="1979"/>
</dbReference>
<dbReference type="STRING" id="10090.ENSMUSP00000045570"/>
<dbReference type="GlyGen" id="Q811F1">
    <property type="glycosylation" value="1 site"/>
</dbReference>
<dbReference type="iPTMnet" id="Q811F1"/>
<dbReference type="PhosphoSitePlus" id="Q811F1"/>
<dbReference type="PaxDb" id="10090-ENSMUSP00000045570"/>
<dbReference type="ProteomicsDB" id="275055"/>
<dbReference type="Antibodypedia" id="50783">
    <property type="antibodies" value="88 antibodies from 16 providers"/>
</dbReference>
<dbReference type="Ensembl" id="ENSMUST00000039867.10">
    <property type="protein sequence ID" value="ENSMUSP00000045570.8"/>
    <property type="gene ID" value="ENSMUSG00000033964.13"/>
</dbReference>
<dbReference type="GeneID" id="226470"/>
<dbReference type="KEGG" id="mmu:226470"/>
<dbReference type="UCSC" id="uc007cwg.2">
    <property type="organism name" value="mouse"/>
</dbReference>
<dbReference type="AGR" id="MGI:2444487"/>
<dbReference type="CTD" id="360023"/>
<dbReference type="MGI" id="MGI:2444487">
    <property type="gene designation" value="Zbtb41"/>
</dbReference>
<dbReference type="VEuPathDB" id="HostDB:ENSMUSG00000033964"/>
<dbReference type="eggNOG" id="KOG1721">
    <property type="taxonomic scope" value="Eukaryota"/>
</dbReference>
<dbReference type="GeneTree" id="ENSGT00550000075080"/>
<dbReference type="InParanoid" id="Q811F1"/>
<dbReference type="OMA" id="MVEKASF"/>
<dbReference type="OrthoDB" id="654211at2759"/>
<dbReference type="PhylomeDB" id="Q811F1"/>
<dbReference type="TreeFam" id="TF350933"/>
<dbReference type="BioGRID-ORCS" id="226470">
    <property type="hits" value="6 hits in 77 CRISPR screens"/>
</dbReference>
<dbReference type="PRO" id="PR:Q811F1"/>
<dbReference type="Proteomes" id="UP000000589">
    <property type="component" value="Chromosome 1"/>
</dbReference>
<dbReference type="RNAct" id="Q811F1">
    <property type="molecule type" value="protein"/>
</dbReference>
<dbReference type="Bgee" id="ENSMUSG00000033964">
    <property type="expression patterns" value="Expressed in epithelium of lens and 220 other cell types or tissues"/>
</dbReference>
<dbReference type="ExpressionAtlas" id="Q811F1">
    <property type="expression patterns" value="baseline and differential"/>
</dbReference>
<dbReference type="GO" id="GO:0005634">
    <property type="term" value="C:nucleus"/>
    <property type="evidence" value="ECO:0007669"/>
    <property type="project" value="UniProtKB-SubCell"/>
</dbReference>
<dbReference type="GO" id="GO:0003677">
    <property type="term" value="F:DNA binding"/>
    <property type="evidence" value="ECO:0007669"/>
    <property type="project" value="UniProtKB-KW"/>
</dbReference>
<dbReference type="GO" id="GO:0008270">
    <property type="term" value="F:zinc ion binding"/>
    <property type="evidence" value="ECO:0007669"/>
    <property type="project" value="UniProtKB-KW"/>
</dbReference>
<dbReference type="CDD" id="cd18226">
    <property type="entry name" value="BTB_POZ_ZBTB41"/>
    <property type="match status" value="1"/>
</dbReference>
<dbReference type="FunFam" id="3.30.160.60:FF:000337">
    <property type="entry name" value="Zinc finger and BTB domain containing 41"/>
    <property type="match status" value="2"/>
</dbReference>
<dbReference type="FunFam" id="3.30.160.60:FF:001133">
    <property type="entry name" value="Zinc finger and BTB domain containing 41"/>
    <property type="match status" value="1"/>
</dbReference>
<dbReference type="FunFam" id="3.30.160.60:FF:001160">
    <property type="entry name" value="Zinc finger and BTB domain containing 41"/>
    <property type="match status" value="1"/>
</dbReference>
<dbReference type="FunFam" id="3.30.160.60:FF:001227">
    <property type="entry name" value="Zinc finger and BTB domain containing 41"/>
    <property type="match status" value="1"/>
</dbReference>
<dbReference type="FunFam" id="3.30.160.60:FF:001084">
    <property type="entry name" value="Zinc finger and BTB domain-containing 41"/>
    <property type="match status" value="1"/>
</dbReference>
<dbReference type="FunFam" id="3.30.160.60:FF:001019">
    <property type="entry name" value="Zinc finger and BTB domain-containing protein 41"/>
    <property type="match status" value="1"/>
</dbReference>
<dbReference type="FunFam" id="3.30.160.60:FF:001282">
    <property type="entry name" value="Zinc finger and BTB domain-containing protein 41"/>
    <property type="match status" value="1"/>
</dbReference>
<dbReference type="FunFam" id="3.30.160.60:FF:000841">
    <property type="entry name" value="zinc finger and BTB domain-containing protein 41"/>
    <property type="match status" value="1"/>
</dbReference>
<dbReference type="FunFam" id="3.30.160.60:FF:000888">
    <property type="entry name" value="zinc finger and BTB domain-containing protein 41"/>
    <property type="match status" value="1"/>
</dbReference>
<dbReference type="FunFam" id="3.30.710.10:FF:000088">
    <property type="entry name" value="zinc finger and BTB domain-containing protein 41"/>
    <property type="match status" value="1"/>
</dbReference>
<dbReference type="FunFam" id="3.30.160.60:FF:000624">
    <property type="entry name" value="zinc finger protein 697"/>
    <property type="match status" value="1"/>
</dbReference>
<dbReference type="Gene3D" id="3.30.160.60">
    <property type="entry name" value="Classic Zinc Finger"/>
    <property type="match status" value="11"/>
</dbReference>
<dbReference type="Gene3D" id="3.30.710.10">
    <property type="entry name" value="Potassium Channel Kv1.1, Chain A"/>
    <property type="match status" value="1"/>
</dbReference>
<dbReference type="InterPro" id="IPR000210">
    <property type="entry name" value="BTB/POZ_dom"/>
</dbReference>
<dbReference type="InterPro" id="IPR011333">
    <property type="entry name" value="SKP1/BTB/POZ_sf"/>
</dbReference>
<dbReference type="InterPro" id="IPR036236">
    <property type="entry name" value="Znf_C2H2_sf"/>
</dbReference>
<dbReference type="InterPro" id="IPR013087">
    <property type="entry name" value="Znf_C2H2_type"/>
</dbReference>
<dbReference type="PANTHER" id="PTHR24379:SF121">
    <property type="entry name" value="C2H2-TYPE DOMAIN-CONTAINING PROTEIN"/>
    <property type="match status" value="1"/>
</dbReference>
<dbReference type="PANTHER" id="PTHR24379">
    <property type="entry name" value="KRAB AND ZINC FINGER DOMAIN-CONTAINING"/>
    <property type="match status" value="1"/>
</dbReference>
<dbReference type="Pfam" id="PF00651">
    <property type="entry name" value="BTB"/>
    <property type="match status" value="1"/>
</dbReference>
<dbReference type="Pfam" id="PF00096">
    <property type="entry name" value="zf-C2H2"/>
    <property type="match status" value="9"/>
</dbReference>
<dbReference type="SMART" id="SM00225">
    <property type="entry name" value="BTB"/>
    <property type="match status" value="1"/>
</dbReference>
<dbReference type="SMART" id="SM00355">
    <property type="entry name" value="ZnF_C2H2"/>
    <property type="match status" value="14"/>
</dbReference>
<dbReference type="SUPFAM" id="SSF57667">
    <property type="entry name" value="beta-beta-alpha zinc fingers"/>
    <property type="match status" value="7"/>
</dbReference>
<dbReference type="SUPFAM" id="SSF54695">
    <property type="entry name" value="POZ domain"/>
    <property type="match status" value="1"/>
</dbReference>
<dbReference type="PROSITE" id="PS50097">
    <property type="entry name" value="BTB"/>
    <property type="match status" value="1"/>
</dbReference>
<dbReference type="PROSITE" id="PS00028">
    <property type="entry name" value="ZINC_FINGER_C2H2_1"/>
    <property type="match status" value="13"/>
</dbReference>
<dbReference type="PROSITE" id="PS50157">
    <property type="entry name" value="ZINC_FINGER_C2H2_2"/>
    <property type="match status" value="14"/>
</dbReference>